<organism>
    <name type="scientific">Homo sapiens</name>
    <name type="common">Human</name>
    <dbReference type="NCBI Taxonomy" id="9606"/>
    <lineage>
        <taxon>Eukaryota</taxon>
        <taxon>Metazoa</taxon>
        <taxon>Chordata</taxon>
        <taxon>Craniata</taxon>
        <taxon>Vertebrata</taxon>
        <taxon>Euteleostomi</taxon>
        <taxon>Mammalia</taxon>
        <taxon>Eutheria</taxon>
        <taxon>Euarchontoglires</taxon>
        <taxon>Primates</taxon>
        <taxon>Haplorrhini</taxon>
        <taxon>Catarrhini</taxon>
        <taxon>Hominidae</taxon>
        <taxon>Homo</taxon>
    </lineage>
</organism>
<keyword id="KW-0002">3D-structure</keyword>
<keyword id="KW-0025">Alternative splicing</keyword>
<keyword id="KW-0963">Cytoplasm</keyword>
<keyword id="KW-0206">Cytoskeleton</keyword>
<keyword id="KW-0440">LIM domain</keyword>
<keyword id="KW-0479">Metal-binding</keyword>
<keyword id="KW-0539">Nucleus</keyword>
<keyword id="KW-0597">Phosphoprotein</keyword>
<keyword id="KW-1267">Proteomics identification</keyword>
<keyword id="KW-1185">Reference proteome</keyword>
<keyword id="KW-0862">Zinc</keyword>
<name>PDLI2_HUMAN</name>
<comment type="function">
    <text evidence="6">Probable adapter protein located at the actin cytoskeleton that promotes cell attachment. Necessary for the migratory capacity of epithelial cells. Overexpression enhances cell adhesion to collagen and fibronectin and suppresses anchorage independent growth. May contribute to tumor cell migratory capacity.</text>
</comment>
<comment type="subunit">
    <text evidence="1 2">Interacts with alpha-actinins ACTN1 and ACTN4, FLNA and MYH9 (By similarity). Interacts (via LIM zinc-binding domain) with MKRN2 (By similarity).</text>
</comment>
<comment type="interaction">
    <interactant intactId="EBI-9057264">
        <id>Q96JY6</id>
    </interactant>
    <interactant intactId="EBI-717666">
        <id>Q96AP0</id>
        <label>ACD</label>
    </interactant>
    <organismsDiffer>false</organismsDiffer>
    <experiments>2</experiments>
</comment>
<comment type="interaction">
    <interactant intactId="EBI-9057264">
        <id>Q96JY6</id>
    </interactant>
    <interactant intactId="EBI-18985109">
        <id>Q8IW36-1</id>
        <label>ZNF695</label>
    </interactant>
    <organismsDiffer>false</organismsDiffer>
    <experiments>3</experiments>
</comment>
<comment type="subcellular location">
    <subcellularLocation>
        <location evidence="6">Cytoplasm</location>
    </subcellularLocation>
    <subcellularLocation>
        <location evidence="6">Nucleus</location>
    </subcellularLocation>
    <text>May be partially nuclear.</text>
</comment>
<comment type="subcellular location">
    <molecule>Isoform 1</molecule>
    <subcellularLocation>
        <location>Cytoplasm</location>
        <location>Cytoskeleton</location>
    </subcellularLocation>
    <text>Colocalizes with beta-1 integrin (ITGB1) and alpha-actinin but not with paxillin (PXN).</text>
</comment>
<comment type="subcellular location">
    <molecule>Isoform 2</molecule>
    <subcellularLocation>
        <location>Cytoplasm</location>
        <location>Cytoskeleton</location>
    </subcellularLocation>
</comment>
<comment type="subcellular location">
    <molecule>Isoform 3</molecule>
    <subcellularLocation>
        <location>Nucleus</location>
    </subcellularLocation>
</comment>
<comment type="alternative products">
    <event type="alternative splicing"/>
    <isoform>
        <id>Q96JY6-1</id>
        <name>1</name>
        <name>Mystique 2</name>
        <sequence type="displayed"/>
    </isoform>
    <isoform>
        <id>Q96JY6-2</id>
        <name>2</name>
        <sequence type="described" ref="VSP_014058 VSP_014059"/>
    </isoform>
    <isoform>
        <id>Q96JY6-3</id>
        <name>3</name>
        <name>Mystique 1</name>
        <sequence type="described" ref="VSP_014061"/>
    </isoform>
    <isoform>
        <id>Q96JY6-4</id>
        <name>4</name>
        <name>Mystique 3</name>
        <sequence type="described" ref="VSP_014060"/>
    </isoform>
    <isoform>
        <id>Q96JY6-5</id>
        <name>5</name>
        <sequence type="described" ref="VSP_047113"/>
    </isoform>
</comment>
<comment type="sequence caution" evidence="12">
    <conflict type="frameshift">
        <sequence resource="EMBL-CDS" id="AAG16633"/>
    </conflict>
</comment>
<comment type="sequence caution" evidence="12">
    <conflict type="frameshift">
        <sequence resource="EMBL-CDS" id="AAL55747"/>
    </conflict>
</comment>
<comment type="sequence caution" evidence="12">
    <conflict type="frameshift">
        <sequence resource="EMBL-CDS" id="AAL65265"/>
    </conflict>
</comment>
<comment type="sequence caution" evidence="12">
    <conflict type="erroneous initiation">
        <sequence resource="EMBL-CDS" id="BAB15788"/>
    </conflict>
</comment>
<sequence length="352" mass="37459">MALTVDVAGPAPWGFRITGGRDFHTPIMVTKVAERGKAKDADLRPGDIIVAINGESAEGMLHAEAQSKIRQSPSPLRLQLDRSQATSPGQTNGDSSLEVLATRFQGSVRTYTESQSSLRSSYSSPTSLSPRAGSPFSPPPSSSSLTGEAAISRSFQSLACSPGLPAADRLSYSGRPGSRQAGLGRAGDSAVLVLPPSPGPRSSRPSMDSEGGSLLLDEDSEVFKMLQENREGRAAPRQSSSFRLLQEALEAEERGGTPAFLPSSLSPQSSLPASRALATPPKLHTCEKCSTSIANQAVRIQEGRYRHPGCYTCADCGLNLKMRGHFWVGDELYCEKHARQRYSAPATLSSRA</sequence>
<feature type="chain" id="PRO_0000075862" description="PDZ and LIM domain protein 2">
    <location>
        <begin position="1"/>
        <end position="352"/>
    </location>
</feature>
<feature type="domain" description="PDZ" evidence="4">
    <location>
        <begin position="1"/>
        <end position="84"/>
    </location>
</feature>
<feature type="domain" description="LIM zinc-binding" evidence="3">
    <location>
        <begin position="284"/>
        <end position="344"/>
    </location>
</feature>
<feature type="region of interest" description="Disordered" evidence="5">
    <location>
        <begin position="67"/>
        <end position="97"/>
    </location>
</feature>
<feature type="region of interest" description="Disordered" evidence="5">
    <location>
        <begin position="111"/>
        <end position="149"/>
    </location>
</feature>
<feature type="region of interest" description="Disordered" evidence="5">
    <location>
        <begin position="170"/>
        <end position="213"/>
    </location>
</feature>
<feature type="compositionally biased region" description="Polar residues" evidence="5">
    <location>
        <begin position="81"/>
        <end position="95"/>
    </location>
</feature>
<feature type="compositionally biased region" description="Low complexity" evidence="5">
    <location>
        <begin position="111"/>
        <end position="135"/>
    </location>
</feature>
<feature type="modified residue" description="Phosphoserine" evidence="14">
    <location>
        <position position="124"/>
    </location>
</feature>
<feature type="modified residue" description="Phosphothreonine" evidence="14">
    <location>
        <position position="126"/>
    </location>
</feature>
<feature type="modified residue" description="Phosphoserine" evidence="2">
    <location>
        <position position="127"/>
    </location>
</feature>
<feature type="modified residue" description="Phosphoserine" evidence="14">
    <location>
        <position position="129"/>
    </location>
</feature>
<feature type="modified residue" description="Phosphoserine" evidence="2">
    <location>
        <position position="134"/>
    </location>
</feature>
<feature type="modified residue" description="Phosphoserine" evidence="14">
    <location>
        <position position="137"/>
    </location>
</feature>
<feature type="modified residue" description="Phosphoserine" evidence="2">
    <location>
        <position position="143"/>
    </location>
</feature>
<feature type="modified residue" description="Phosphoserine" evidence="14">
    <location>
        <position position="161"/>
    </location>
</feature>
<feature type="modified residue" description="Phosphoserine" evidence="13 14">
    <location>
        <position position="197"/>
    </location>
</feature>
<feature type="modified residue" description="Phosphoserine" evidence="2">
    <location>
        <position position="203"/>
    </location>
</feature>
<feature type="modified residue" description="Phosphoserine" evidence="1">
    <location>
        <position position="213"/>
    </location>
</feature>
<feature type="modified residue" description="Phosphoserine" evidence="1">
    <location>
        <position position="266"/>
    </location>
</feature>
<feature type="splice variant" id="VSP_047113" description="In isoform 5." evidence="12">
    <original>M</original>
    <variation>MRGGRARPAWESFMGLPPRSSAKWGAGQSLDRLCCAPGSRGLAGAPGRMRAPPAGRSQPAGGPGDSLPHPPGGLGPGGSAWARRAEAAASRARGGGRGGPGITWAEAGPGAPGGLSPESGRRQRERWRLPAFPPSRAWAPSRTGERQPGERAHLRLSARPALPGAGLLSAPLSARNPGLVRGPAPWSLASAGAPPRAALSPAGALLLQPPARRVLCPRSEGGSRTGRAGPSGWAPPRGARSAESTDRLKGM</variation>
    <location>
        <position position="1"/>
    </location>
</feature>
<feature type="splice variant" id="VSP_014058" description="In isoform 2." evidence="9">
    <original>SFQSLACSPGLPAADRLSYSGRPGSRQAGLGRAGDSAVLVLPPSPGPRSSRPSMDSEGGSLLLDEDSEVFK</original>
    <variation>RRPRPRWRLGGAGAAAFPGPSFLQAQHGLGRGKPPPGRGLGSLQDAAGKSRGTGGPPTVQLLSALAGSPGG</variation>
    <location>
        <begin position="154"/>
        <end position="224"/>
    </location>
</feature>
<feature type="splice variant" id="VSP_014059" description="In isoform 2." evidence="9">
    <location>
        <begin position="225"/>
        <end position="352"/>
    </location>
</feature>
<feature type="splice variant" id="VSP_014060" description="In isoform 4." evidence="10">
    <original>GTPAFLPSSLSPQSSLPASRALATPPKLHTCEKCSTSIANQAVRIQEGRYRHPGCYTCADCGLNLKMRGHFWVGDELYCEKHARQRYSAPATLSSRA</original>
    <variation>TRLCASRRAGTATPAATPVPTVG</variation>
    <location>
        <begin position="256"/>
        <end position="352"/>
    </location>
</feature>
<feature type="splice variant" id="VSP_014061" description="In isoform 3." evidence="7 8 11">
    <original>VGDELYCEKHARQRYSAPATLSSRA</original>
    <variation>EDACAMEGMRLSLEALEGMVEGAKRRDRRKTRRPIQPSW</variation>
    <location>
        <begin position="328"/>
        <end position="352"/>
    </location>
</feature>
<feature type="mutagenesis site" description="Abolishes cell adhesion to collagen and ability to suppress anchorage independent growth." evidence="6">
    <original>L</original>
    <variation>K</variation>
    <location>
        <position position="80"/>
    </location>
</feature>
<feature type="mutagenesis site" description="Abolishes ability to suppress anchorage independent growth but not cell adhesion to collagen; when associated with S-316." evidence="6">
    <original>C</original>
    <variation>S</variation>
    <location>
        <position position="313"/>
    </location>
</feature>
<feature type="mutagenesis site" description="Abolishes ability to suppress anchorage independent growth but not cell adhesion to collagen; when associated with S-313." evidence="6">
    <original>C</original>
    <variation>S</variation>
    <location>
        <position position="316"/>
    </location>
</feature>
<feature type="sequence conflict" description="In Ref. 1; AAG16633." evidence="12" ref="1">
    <original>T</original>
    <variation>N</variation>
    <location>
        <position position="91"/>
    </location>
</feature>
<feature type="sequence conflict" description="In Ref. 1; AAG16633." evidence="12" ref="1">
    <original>S</original>
    <variation>F</variation>
    <location>
        <position position="116"/>
    </location>
</feature>
<feature type="sequence conflict" description="In Ref. 4; AAL55747." evidence="12" ref="4">
    <original>A</original>
    <variation>R</variation>
    <location>
        <position position="149"/>
    </location>
</feature>
<feature type="strand" evidence="15">
    <location>
        <begin position="1"/>
        <end position="7"/>
    </location>
</feature>
<feature type="strand" evidence="15">
    <location>
        <begin position="9"/>
        <end position="11"/>
    </location>
</feature>
<feature type="strand" evidence="15">
    <location>
        <begin position="14"/>
        <end position="20"/>
    </location>
</feature>
<feature type="helix" evidence="15">
    <location>
        <begin position="21"/>
        <end position="23"/>
    </location>
</feature>
<feature type="strand" evidence="15">
    <location>
        <begin position="25"/>
        <end position="32"/>
    </location>
</feature>
<feature type="strand" evidence="15">
    <location>
        <begin position="34"/>
        <end position="36"/>
    </location>
</feature>
<feature type="helix" evidence="15">
    <location>
        <begin position="37"/>
        <end position="40"/>
    </location>
</feature>
<feature type="strand" evidence="15">
    <location>
        <begin position="48"/>
        <end position="52"/>
    </location>
</feature>
<feature type="strand" evidence="15">
    <location>
        <begin position="55"/>
        <end position="57"/>
    </location>
</feature>
<feature type="helix" evidence="15">
    <location>
        <begin position="62"/>
        <end position="70"/>
    </location>
</feature>
<feature type="strand" evidence="15">
    <location>
        <begin position="74"/>
        <end position="82"/>
    </location>
</feature>
<protein>
    <recommendedName>
        <fullName>PDZ and LIM domain protein 2</fullName>
    </recommendedName>
    <alternativeName>
        <fullName>PDZ-LIM protein mystique</fullName>
    </alternativeName>
</protein>
<reference key="1">
    <citation type="submission" date="2000-09" db="EMBL/GenBank/DDBJ databases">
        <title>Mystique, a PDZ-LIM protein with one carboxyl terminal LIM domain.</title>
        <authorList>
            <person name="Lau Y.M."/>
            <person name="Kotaka M."/>
            <person name="Chan A.H."/>
            <person name="Lee S.M.Y."/>
            <person name="Au C.C."/>
            <person name="Chim S.S.C."/>
            <person name="Kok L.D.S."/>
            <person name="Ng E.K.O."/>
            <person name="Siu S.S."/>
            <person name="Yiu S.W.H."/>
            <person name="Fung K.P."/>
            <person name="Waye M.M.Y."/>
            <person name="Tsui S.K.W."/>
            <person name="Lee C.Y."/>
        </authorList>
    </citation>
    <scope>NUCLEOTIDE SEQUENCE [MRNA] (ISOFORM 2)</scope>
</reference>
<reference key="2">
    <citation type="submission" date="2001-12" db="EMBL/GenBank/DDBJ databases">
        <authorList>
            <person name="Guo J.H."/>
            <person name="Zan Q."/>
            <person name="Yu L."/>
        </authorList>
    </citation>
    <scope>NUCLEOTIDE SEQUENCE [LARGE SCALE MRNA] (ISOFORM 4)</scope>
    <source>
        <tissue>Hypothalamus</tissue>
    </source>
</reference>
<reference key="3">
    <citation type="submission" date="2003-01" db="EMBL/GenBank/DDBJ databases">
        <title>Cloning a novel protein containing PDZ and LIM domains.</title>
        <authorList>
            <person name="Shan Y.X."/>
            <person name="Yu L."/>
            <person name="Huang C.Q."/>
        </authorList>
    </citation>
    <scope>NUCLEOTIDE SEQUENCE [MRNA] (ISOFORM 3)</scope>
</reference>
<reference key="4">
    <citation type="journal article" date="2004" name="Proc. Natl. Acad. Sci. U.S.A.">
        <title>Large-scale cDNA transfection screening for genes related to cancer development and progression.</title>
        <authorList>
            <person name="Wan D."/>
            <person name="Gong Y."/>
            <person name="Qin W."/>
            <person name="Zhang P."/>
            <person name="Li J."/>
            <person name="Wei L."/>
            <person name="Zhou X."/>
            <person name="Li H."/>
            <person name="Qiu X."/>
            <person name="Zhong F."/>
            <person name="He L."/>
            <person name="Yu J."/>
            <person name="Yao G."/>
            <person name="Jiang H."/>
            <person name="Qian L."/>
            <person name="Yu Y."/>
            <person name="Shu H."/>
            <person name="Chen X."/>
            <person name="Xu H."/>
            <person name="Guo M."/>
            <person name="Pan Z."/>
            <person name="Chen Y."/>
            <person name="Ge C."/>
            <person name="Yang S."/>
            <person name="Gu J."/>
        </authorList>
    </citation>
    <scope>NUCLEOTIDE SEQUENCE [LARGE SCALE MRNA] (ISOFORM 1)</scope>
</reference>
<reference key="5">
    <citation type="journal article" date="2000" name="DNA Res.">
        <title>Characterization of long cDNA clones from human adult spleen.</title>
        <authorList>
            <person name="Hattori A."/>
            <person name="Okumura K."/>
            <person name="Nagase T."/>
            <person name="Kikuno R."/>
            <person name="Hirosawa M."/>
            <person name="Ohara O."/>
        </authorList>
    </citation>
    <scope>NUCLEOTIDE SEQUENCE [LARGE SCALE MRNA] (ISOFORM 3)</scope>
    <source>
        <tissue>Spleen</tissue>
    </source>
</reference>
<reference key="6">
    <citation type="journal article" date="2004" name="Nat. Genet.">
        <title>Complete sequencing and characterization of 21,243 full-length human cDNAs.</title>
        <authorList>
            <person name="Ota T."/>
            <person name="Suzuki Y."/>
            <person name="Nishikawa T."/>
            <person name="Otsuki T."/>
            <person name="Sugiyama T."/>
            <person name="Irie R."/>
            <person name="Wakamatsu A."/>
            <person name="Hayashi K."/>
            <person name="Sato H."/>
            <person name="Nagai K."/>
            <person name="Kimura K."/>
            <person name="Makita H."/>
            <person name="Sekine M."/>
            <person name="Obayashi M."/>
            <person name="Nishi T."/>
            <person name="Shibahara T."/>
            <person name="Tanaka T."/>
            <person name="Ishii S."/>
            <person name="Yamamoto J."/>
            <person name="Saito K."/>
            <person name="Kawai Y."/>
            <person name="Isono Y."/>
            <person name="Nakamura Y."/>
            <person name="Nagahari K."/>
            <person name="Murakami K."/>
            <person name="Yasuda T."/>
            <person name="Iwayanagi T."/>
            <person name="Wagatsuma M."/>
            <person name="Shiratori A."/>
            <person name="Sudo H."/>
            <person name="Hosoiri T."/>
            <person name="Kaku Y."/>
            <person name="Kodaira H."/>
            <person name="Kondo H."/>
            <person name="Sugawara M."/>
            <person name="Takahashi M."/>
            <person name="Kanda K."/>
            <person name="Yokoi T."/>
            <person name="Furuya T."/>
            <person name="Kikkawa E."/>
            <person name="Omura Y."/>
            <person name="Abe K."/>
            <person name="Kamihara K."/>
            <person name="Katsuta N."/>
            <person name="Sato K."/>
            <person name="Tanikawa M."/>
            <person name="Yamazaki M."/>
            <person name="Ninomiya K."/>
            <person name="Ishibashi T."/>
            <person name="Yamashita H."/>
            <person name="Murakawa K."/>
            <person name="Fujimori K."/>
            <person name="Tanai H."/>
            <person name="Kimata M."/>
            <person name="Watanabe M."/>
            <person name="Hiraoka S."/>
            <person name="Chiba Y."/>
            <person name="Ishida S."/>
            <person name="Ono Y."/>
            <person name="Takiguchi S."/>
            <person name="Watanabe S."/>
            <person name="Yosida M."/>
            <person name="Hotuta T."/>
            <person name="Kusano J."/>
            <person name="Kanehori K."/>
            <person name="Takahashi-Fujii A."/>
            <person name="Hara H."/>
            <person name="Tanase T.-O."/>
            <person name="Nomura Y."/>
            <person name="Togiya S."/>
            <person name="Komai F."/>
            <person name="Hara R."/>
            <person name="Takeuchi K."/>
            <person name="Arita M."/>
            <person name="Imose N."/>
            <person name="Musashino K."/>
            <person name="Yuuki H."/>
            <person name="Oshima A."/>
            <person name="Sasaki N."/>
            <person name="Aotsuka S."/>
            <person name="Yoshikawa Y."/>
            <person name="Matsunawa H."/>
            <person name="Ichihara T."/>
            <person name="Shiohata N."/>
            <person name="Sano S."/>
            <person name="Moriya S."/>
            <person name="Momiyama H."/>
            <person name="Satoh N."/>
            <person name="Takami S."/>
            <person name="Terashima Y."/>
            <person name="Suzuki O."/>
            <person name="Nakagawa S."/>
            <person name="Senoh A."/>
            <person name="Mizoguchi H."/>
            <person name="Goto Y."/>
            <person name="Shimizu F."/>
            <person name="Wakebe H."/>
            <person name="Hishigaki H."/>
            <person name="Watanabe T."/>
            <person name="Sugiyama A."/>
            <person name="Takemoto M."/>
            <person name="Kawakami B."/>
            <person name="Yamazaki M."/>
            <person name="Watanabe K."/>
            <person name="Kumagai A."/>
            <person name="Itakura S."/>
            <person name="Fukuzumi Y."/>
            <person name="Fujimori Y."/>
            <person name="Komiyama M."/>
            <person name="Tashiro H."/>
            <person name="Tanigami A."/>
            <person name="Fujiwara T."/>
            <person name="Ono T."/>
            <person name="Yamada K."/>
            <person name="Fujii Y."/>
            <person name="Ozaki K."/>
            <person name="Hirao M."/>
            <person name="Ohmori Y."/>
            <person name="Kawabata A."/>
            <person name="Hikiji T."/>
            <person name="Kobatake N."/>
            <person name="Inagaki H."/>
            <person name="Ikema Y."/>
            <person name="Okamoto S."/>
            <person name="Okitani R."/>
            <person name="Kawakami T."/>
            <person name="Noguchi S."/>
            <person name="Itoh T."/>
            <person name="Shigeta K."/>
            <person name="Senba T."/>
            <person name="Matsumura K."/>
            <person name="Nakajima Y."/>
            <person name="Mizuno T."/>
            <person name="Morinaga M."/>
            <person name="Sasaki M."/>
            <person name="Togashi T."/>
            <person name="Oyama M."/>
            <person name="Hata H."/>
            <person name="Watanabe M."/>
            <person name="Komatsu T."/>
            <person name="Mizushima-Sugano J."/>
            <person name="Satoh T."/>
            <person name="Shirai Y."/>
            <person name="Takahashi Y."/>
            <person name="Nakagawa K."/>
            <person name="Okumura K."/>
            <person name="Nagase T."/>
            <person name="Nomura N."/>
            <person name="Kikuchi H."/>
            <person name="Masuho Y."/>
            <person name="Yamashita R."/>
            <person name="Nakai K."/>
            <person name="Yada T."/>
            <person name="Nakamura Y."/>
            <person name="Ohara O."/>
            <person name="Isogai T."/>
            <person name="Sugano S."/>
        </authorList>
    </citation>
    <scope>NUCLEOTIDE SEQUENCE [LARGE SCALE MRNA] (ISOFORM 1)</scope>
    <source>
        <tissue>Placenta</tissue>
        <tissue>Spleen</tissue>
    </source>
</reference>
<reference key="7">
    <citation type="journal article" date="2006" name="Nature">
        <title>DNA sequence and analysis of human chromosome 8.</title>
        <authorList>
            <person name="Nusbaum C."/>
            <person name="Mikkelsen T.S."/>
            <person name="Zody M.C."/>
            <person name="Asakawa S."/>
            <person name="Taudien S."/>
            <person name="Garber M."/>
            <person name="Kodira C.D."/>
            <person name="Schueler M.G."/>
            <person name="Shimizu A."/>
            <person name="Whittaker C.A."/>
            <person name="Chang J.L."/>
            <person name="Cuomo C.A."/>
            <person name="Dewar K."/>
            <person name="FitzGerald M.G."/>
            <person name="Yang X."/>
            <person name="Allen N.R."/>
            <person name="Anderson S."/>
            <person name="Asakawa T."/>
            <person name="Blechschmidt K."/>
            <person name="Bloom T."/>
            <person name="Borowsky M.L."/>
            <person name="Butler J."/>
            <person name="Cook A."/>
            <person name="Corum B."/>
            <person name="DeArellano K."/>
            <person name="DeCaprio D."/>
            <person name="Dooley K.T."/>
            <person name="Dorris L. III"/>
            <person name="Engels R."/>
            <person name="Gloeckner G."/>
            <person name="Hafez N."/>
            <person name="Hagopian D.S."/>
            <person name="Hall J.L."/>
            <person name="Ishikawa S.K."/>
            <person name="Jaffe D.B."/>
            <person name="Kamat A."/>
            <person name="Kudoh J."/>
            <person name="Lehmann R."/>
            <person name="Lokitsang T."/>
            <person name="Macdonald P."/>
            <person name="Major J.E."/>
            <person name="Matthews C.D."/>
            <person name="Mauceli E."/>
            <person name="Menzel U."/>
            <person name="Mihalev A.H."/>
            <person name="Minoshima S."/>
            <person name="Murayama Y."/>
            <person name="Naylor J.W."/>
            <person name="Nicol R."/>
            <person name="Nguyen C."/>
            <person name="O'Leary S.B."/>
            <person name="O'Neill K."/>
            <person name="Parker S.C.J."/>
            <person name="Polley A."/>
            <person name="Raymond C.K."/>
            <person name="Reichwald K."/>
            <person name="Rodriguez J."/>
            <person name="Sasaki T."/>
            <person name="Schilhabel M."/>
            <person name="Siddiqui R."/>
            <person name="Smith C.L."/>
            <person name="Sneddon T.P."/>
            <person name="Talamas J.A."/>
            <person name="Tenzin P."/>
            <person name="Topham K."/>
            <person name="Venkataraman V."/>
            <person name="Wen G."/>
            <person name="Yamazaki S."/>
            <person name="Young S.K."/>
            <person name="Zeng Q."/>
            <person name="Zimmer A.R."/>
            <person name="Rosenthal A."/>
            <person name="Birren B.W."/>
            <person name="Platzer M."/>
            <person name="Shimizu N."/>
            <person name="Lander E.S."/>
        </authorList>
    </citation>
    <scope>NUCLEOTIDE SEQUENCE [LARGE SCALE GENOMIC DNA]</scope>
</reference>
<reference key="8">
    <citation type="submission" date="2005-09" db="EMBL/GenBank/DDBJ databases">
        <authorList>
            <person name="Mural R.J."/>
            <person name="Istrail S."/>
            <person name="Sutton G.G."/>
            <person name="Florea L."/>
            <person name="Halpern A.L."/>
            <person name="Mobarry C.M."/>
            <person name="Lippert R."/>
            <person name="Walenz B."/>
            <person name="Shatkay H."/>
            <person name="Dew I."/>
            <person name="Miller J.R."/>
            <person name="Flanigan M.J."/>
            <person name="Edwards N.J."/>
            <person name="Bolanos R."/>
            <person name="Fasulo D."/>
            <person name="Halldorsson B.V."/>
            <person name="Hannenhalli S."/>
            <person name="Turner R."/>
            <person name="Yooseph S."/>
            <person name="Lu F."/>
            <person name="Nusskern D.R."/>
            <person name="Shue B.C."/>
            <person name="Zheng X.H."/>
            <person name="Zhong F."/>
            <person name="Delcher A.L."/>
            <person name="Huson D.H."/>
            <person name="Kravitz S.A."/>
            <person name="Mouchard L."/>
            <person name="Reinert K."/>
            <person name="Remington K.A."/>
            <person name="Clark A.G."/>
            <person name="Waterman M.S."/>
            <person name="Eichler E.E."/>
            <person name="Adams M.D."/>
            <person name="Hunkapiller M.W."/>
            <person name="Myers E.W."/>
            <person name="Venter J.C."/>
        </authorList>
    </citation>
    <scope>NUCLEOTIDE SEQUENCE [LARGE SCALE GENOMIC DNA]</scope>
</reference>
<reference key="9">
    <citation type="journal article" date="2004" name="Genome Res.">
        <title>The status, quality, and expansion of the NIH full-length cDNA project: the Mammalian Gene Collection (MGC).</title>
        <authorList>
            <consortium name="The MGC Project Team"/>
        </authorList>
    </citation>
    <scope>NUCLEOTIDE SEQUENCE [LARGE SCALE MRNA] (ISOFORM 3)</scope>
    <source>
        <tissue>Placenta</tissue>
    </source>
</reference>
<reference key="10">
    <citation type="journal article" date="2005" name="Mol. Biol. Cell">
        <title>Mystique is a new IGF-I regulated PDZ-LIM domain protein that promotes cell attachment and migration and suppresses anchorage independent growth.</title>
        <authorList>
            <person name="Loughran G."/>
            <person name="Healy N."/>
            <person name="Kiely P.A."/>
            <person name="Huigsloot M."/>
            <person name="Kedersha N.L."/>
            <person name="O'connor R."/>
        </authorList>
    </citation>
    <scope>FUNCTION</scope>
    <scope>SUBCELLULAR LOCATION</scope>
    <scope>MUTAGENESIS OF LEU-80; CYS-313 AND CYS-316</scope>
</reference>
<reference key="11">
    <citation type="journal article" date="2009" name="Sci. Signal.">
        <title>Quantitative phosphoproteomic analysis of T cell receptor signaling reveals system-wide modulation of protein-protein interactions.</title>
        <authorList>
            <person name="Mayya V."/>
            <person name="Lundgren D.H."/>
            <person name="Hwang S.-I."/>
            <person name="Rezaul K."/>
            <person name="Wu L."/>
            <person name="Eng J.K."/>
            <person name="Rodionov V."/>
            <person name="Han D.K."/>
        </authorList>
    </citation>
    <scope>PHOSPHORYLATION [LARGE SCALE ANALYSIS] AT SER-197</scope>
    <scope>IDENTIFICATION BY MASS SPECTROMETRY [LARGE SCALE ANALYSIS]</scope>
    <source>
        <tissue>Leukemic T-cell</tissue>
    </source>
</reference>
<reference key="12">
    <citation type="journal article" date="2014" name="J. Proteomics">
        <title>An enzyme assisted RP-RPLC approach for in-depth analysis of human liver phosphoproteome.</title>
        <authorList>
            <person name="Bian Y."/>
            <person name="Song C."/>
            <person name="Cheng K."/>
            <person name="Dong M."/>
            <person name="Wang F."/>
            <person name="Huang J."/>
            <person name="Sun D."/>
            <person name="Wang L."/>
            <person name="Ye M."/>
            <person name="Zou H."/>
        </authorList>
    </citation>
    <scope>PHOSPHORYLATION [LARGE SCALE ANALYSIS] AT SER-124; THR-126; SER-129; SER-137; SER-161 AND SER-197</scope>
    <scope>IDENTIFICATION BY MASS SPECTROMETRY [LARGE SCALE ANALYSIS]</scope>
    <source>
        <tissue>Liver</tissue>
    </source>
</reference>
<reference key="13">
    <citation type="submission" date="2009-02" db="PDB data bank">
        <title>Structure of the PDZ domain of human PDLIM2 bound to a C-terminal extension from human beta-tropomyosin.</title>
        <authorList>
            <consortium name="Structural genomics consortium (SGC)"/>
        </authorList>
    </citation>
    <scope>X-RAY CRYSTALLOGRAPHY (1.7 ANGSTROMS) OF 1-82</scope>
</reference>
<accession>Q96JY6</accession>
<accession>D3DSR5</accession>
<accession>J3KNH4</accession>
<accession>Q7Z584</accession>
<accession>Q86WM8</accession>
<accession>Q8WZ29</accession>
<accession>Q9H4L9</accession>
<accession>Q9H7I2</accession>
<dbReference type="EMBL" id="AY007729">
    <property type="protein sequence ID" value="AAG16633.1"/>
    <property type="status" value="ALT_FRAME"/>
    <property type="molecule type" value="mRNA"/>
</dbReference>
<dbReference type="EMBL" id="AY070438">
    <property type="protein sequence ID" value="AAL65265.1"/>
    <property type="status" value="ALT_FRAME"/>
    <property type="molecule type" value="mRNA"/>
</dbReference>
<dbReference type="EMBL" id="AY217349">
    <property type="protein sequence ID" value="AAO45102.1"/>
    <property type="molecule type" value="mRNA"/>
</dbReference>
<dbReference type="EMBL" id="AF289563">
    <property type="protein sequence ID" value="AAL55747.1"/>
    <property type="status" value="ALT_FRAME"/>
    <property type="molecule type" value="mRNA"/>
</dbReference>
<dbReference type="EMBL" id="AK024498">
    <property type="protein sequence ID" value="BAB15788.1"/>
    <property type="status" value="ALT_INIT"/>
    <property type="molecule type" value="mRNA"/>
</dbReference>
<dbReference type="EMBL" id="AK027800">
    <property type="protein sequence ID" value="BAB55378.1"/>
    <property type="molecule type" value="mRNA"/>
</dbReference>
<dbReference type="EMBL" id="AC037459">
    <property type="status" value="NOT_ANNOTATED_CDS"/>
    <property type="molecule type" value="Genomic_DNA"/>
</dbReference>
<dbReference type="EMBL" id="CH471080">
    <property type="protein sequence ID" value="EAW63667.1"/>
    <property type="molecule type" value="Genomic_DNA"/>
</dbReference>
<dbReference type="EMBL" id="CH471080">
    <property type="protein sequence ID" value="EAW63669.1"/>
    <property type="molecule type" value="Genomic_DNA"/>
</dbReference>
<dbReference type="EMBL" id="BC021556">
    <property type="protein sequence ID" value="AAH21556.1"/>
    <property type="molecule type" value="mRNA"/>
</dbReference>
<dbReference type="EMBL" id="BC071774">
    <property type="protein sequence ID" value="AAH71774.1"/>
    <property type="molecule type" value="mRNA"/>
</dbReference>
<dbReference type="CCDS" id="CCDS34860.1">
    <molecule id="Q96JY6-3"/>
</dbReference>
<dbReference type="CCDS" id="CCDS34861.1">
    <molecule id="Q96JY6-4"/>
</dbReference>
<dbReference type="CCDS" id="CCDS6032.2">
    <molecule id="Q96JY6-5"/>
</dbReference>
<dbReference type="CCDS" id="CCDS94264.1">
    <molecule id="Q96JY6-1"/>
</dbReference>
<dbReference type="RefSeq" id="NP_001355049.1">
    <molecule id="Q96JY6-1"/>
    <property type="nucleotide sequence ID" value="NM_001368120.1"/>
</dbReference>
<dbReference type="RefSeq" id="NP_067643.3">
    <molecule id="Q96JY6-5"/>
    <property type="nucleotide sequence ID" value="NM_021630.5"/>
</dbReference>
<dbReference type="RefSeq" id="NP_789847.1">
    <molecule id="Q96JY6-3"/>
    <property type="nucleotide sequence ID" value="NM_176871.5"/>
</dbReference>
<dbReference type="RefSeq" id="NP_932159.1">
    <molecule id="Q96JY6-4"/>
    <property type="nucleotide sequence ID" value="NM_198042.4"/>
</dbReference>
<dbReference type="PDB" id="2PA1">
    <property type="method" value="X-ray"/>
    <property type="resolution" value="1.70 A"/>
    <property type="chains" value="A=1-82"/>
</dbReference>
<dbReference type="PDB" id="3PDV">
    <property type="method" value="X-ray"/>
    <property type="resolution" value="2.20 A"/>
    <property type="chains" value="A=1-83"/>
</dbReference>
<dbReference type="PDBsum" id="2PA1"/>
<dbReference type="PDBsum" id="3PDV"/>
<dbReference type="SMR" id="Q96JY6"/>
<dbReference type="BioGRID" id="122122">
    <property type="interactions" value="28"/>
</dbReference>
<dbReference type="FunCoup" id="Q96JY6">
    <property type="interactions" value="27"/>
</dbReference>
<dbReference type="IntAct" id="Q96JY6">
    <property type="interactions" value="15"/>
</dbReference>
<dbReference type="MINT" id="Q96JY6"/>
<dbReference type="STRING" id="9606.ENSP00000312634"/>
<dbReference type="GlyCosmos" id="Q96JY6">
    <property type="glycosylation" value="8 sites, 2 glycans"/>
</dbReference>
<dbReference type="GlyGen" id="Q96JY6">
    <property type="glycosylation" value="10 sites, 2 O-linked glycans (10 sites)"/>
</dbReference>
<dbReference type="iPTMnet" id="Q96JY6"/>
<dbReference type="PhosphoSitePlus" id="Q96JY6"/>
<dbReference type="BioMuta" id="PDLIM2"/>
<dbReference type="DMDM" id="67461069"/>
<dbReference type="jPOST" id="Q96JY6"/>
<dbReference type="MassIVE" id="Q96JY6"/>
<dbReference type="PaxDb" id="9606-ENSP00000312634"/>
<dbReference type="PeptideAtlas" id="Q96JY6"/>
<dbReference type="ProteomicsDB" id="77017">
    <molecule id="Q96JY6-1"/>
</dbReference>
<dbReference type="ProteomicsDB" id="77018">
    <molecule id="Q96JY6-2"/>
</dbReference>
<dbReference type="ProteomicsDB" id="77019">
    <molecule id="Q96JY6-3"/>
</dbReference>
<dbReference type="ProteomicsDB" id="77020">
    <molecule id="Q96JY6-4"/>
</dbReference>
<dbReference type="Pumba" id="Q96JY6"/>
<dbReference type="Antibodypedia" id="999">
    <property type="antibodies" value="265 antibodies from 26 providers"/>
</dbReference>
<dbReference type="DNASU" id="64236"/>
<dbReference type="Ensembl" id="ENST00000265810.8">
    <molecule id="Q96JY6-3"/>
    <property type="protein sequence ID" value="ENSP00000265810.4"/>
    <property type="gene ID" value="ENSG00000120913.24"/>
</dbReference>
<dbReference type="Ensembl" id="ENST00000308354.11">
    <molecule id="Q96JY6-5"/>
    <property type="protein sequence ID" value="ENSP00000312634.7"/>
    <property type="gene ID" value="ENSG00000120913.24"/>
</dbReference>
<dbReference type="Ensembl" id="ENST00000339162.11">
    <molecule id="Q96JY6-5"/>
    <property type="protein sequence ID" value="ENSP00000342035.8"/>
    <property type="gene ID" value="ENSG00000120913.24"/>
</dbReference>
<dbReference type="Ensembl" id="ENST00000397760.8">
    <molecule id="Q96JY6-1"/>
    <property type="protein sequence ID" value="ENSP00000380867.4"/>
    <property type="gene ID" value="ENSG00000120913.24"/>
</dbReference>
<dbReference type="Ensembl" id="ENST00000397761.6">
    <molecule id="Q96JY6-1"/>
    <property type="protein sequence ID" value="ENSP00000380868.2"/>
    <property type="gene ID" value="ENSG00000120913.24"/>
</dbReference>
<dbReference type="Ensembl" id="ENST00000409141.5">
    <molecule id="Q96JY6-4"/>
    <property type="protein sequence ID" value="ENSP00000386868.1"/>
    <property type="gene ID" value="ENSG00000120913.24"/>
</dbReference>
<dbReference type="Ensembl" id="ENST00000409417.6">
    <molecule id="Q96JY6-1"/>
    <property type="protein sequence ID" value="ENSP00000387084.1"/>
    <property type="gene ID" value="ENSG00000120913.24"/>
</dbReference>
<dbReference type="GeneID" id="64236"/>
<dbReference type="KEGG" id="hsa:64236"/>
<dbReference type="MANE-Select" id="ENST00000409417.6">
    <property type="protein sequence ID" value="ENSP00000387084.1"/>
    <property type="RefSeq nucleotide sequence ID" value="NM_001368120.1"/>
    <property type="RefSeq protein sequence ID" value="NP_001355049.1"/>
</dbReference>
<dbReference type="UCSC" id="uc003xby.5">
    <molecule id="Q96JY6-1"/>
    <property type="organism name" value="human"/>
</dbReference>
<dbReference type="AGR" id="HGNC:13992"/>
<dbReference type="CTD" id="64236"/>
<dbReference type="DisGeNET" id="64236"/>
<dbReference type="GeneCards" id="PDLIM2"/>
<dbReference type="HGNC" id="HGNC:13992">
    <property type="gene designation" value="PDLIM2"/>
</dbReference>
<dbReference type="HPA" id="ENSG00000120913">
    <property type="expression patterns" value="Low tissue specificity"/>
</dbReference>
<dbReference type="MIM" id="609722">
    <property type="type" value="gene"/>
</dbReference>
<dbReference type="neXtProt" id="NX_Q96JY6"/>
<dbReference type="OpenTargets" id="ENSG00000120913"/>
<dbReference type="PharmGKB" id="PA33159"/>
<dbReference type="VEuPathDB" id="HostDB:ENSG00000120913"/>
<dbReference type="eggNOG" id="KOG1703">
    <property type="taxonomic scope" value="Eukaryota"/>
</dbReference>
<dbReference type="GeneTree" id="ENSGT00940000160418"/>
<dbReference type="InParanoid" id="Q96JY6"/>
<dbReference type="OMA" id="MRGHFWF"/>
<dbReference type="OrthoDB" id="445995at2759"/>
<dbReference type="PAN-GO" id="Q96JY6">
    <property type="GO annotations" value="9 GO annotations based on evolutionary models"/>
</dbReference>
<dbReference type="PhylomeDB" id="Q96JY6"/>
<dbReference type="TreeFam" id="TF106408"/>
<dbReference type="PathwayCommons" id="Q96JY6"/>
<dbReference type="SignaLink" id="Q96JY6"/>
<dbReference type="SIGNOR" id="Q96JY6"/>
<dbReference type="BioGRID-ORCS" id="64236">
    <property type="hits" value="13 hits in 1149 CRISPR screens"/>
</dbReference>
<dbReference type="ChiTaRS" id="PDLIM2">
    <property type="organism name" value="human"/>
</dbReference>
<dbReference type="EvolutionaryTrace" id="Q96JY6"/>
<dbReference type="GeneWiki" id="PDLIM2"/>
<dbReference type="GenomeRNAi" id="64236"/>
<dbReference type="Pharos" id="Q96JY6">
    <property type="development level" value="Tbio"/>
</dbReference>
<dbReference type="PRO" id="PR:Q96JY6"/>
<dbReference type="Proteomes" id="UP000005640">
    <property type="component" value="Chromosome 8"/>
</dbReference>
<dbReference type="RNAct" id="Q96JY6">
    <property type="molecule type" value="protein"/>
</dbReference>
<dbReference type="Bgee" id="ENSG00000120913">
    <property type="expression patterns" value="Expressed in spleen and 200 other cell types or tissues"/>
</dbReference>
<dbReference type="ExpressionAtlas" id="Q96JY6">
    <property type="expression patterns" value="baseline and differential"/>
</dbReference>
<dbReference type="GO" id="GO:0005912">
    <property type="term" value="C:adherens junction"/>
    <property type="evidence" value="ECO:0000318"/>
    <property type="project" value="GO_Central"/>
</dbReference>
<dbReference type="GO" id="GO:0031941">
    <property type="term" value="C:filamentous actin"/>
    <property type="evidence" value="ECO:0000318"/>
    <property type="project" value="GO_Central"/>
</dbReference>
<dbReference type="GO" id="GO:0005634">
    <property type="term" value="C:nucleus"/>
    <property type="evidence" value="ECO:0007669"/>
    <property type="project" value="UniProtKB-SubCell"/>
</dbReference>
<dbReference type="GO" id="GO:0001725">
    <property type="term" value="C:stress fiber"/>
    <property type="evidence" value="ECO:0000318"/>
    <property type="project" value="GO_Central"/>
</dbReference>
<dbReference type="GO" id="GO:0030018">
    <property type="term" value="C:Z disc"/>
    <property type="evidence" value="ECO:0000318"/>
    <property type="project" value="GO_Central"/>
</dbReference>
<dbReference type="GO" id="GO:0003779">
    <property type="term" value="F:actin binding"/>
    <property type="evidence" value="ECO:0000318"/>
    <property type="project" value="GO_Central"/>
</dbReference>
<dbReference type="GO" id="GO:0046872">
    <property type="term" value="F:metal ion binding"/>
    <property type="evidence" value="ECO:0007669"/>
    <property type="project" value="UniProtKB-KW"/>
</dbReference>
<dbReference type="GO" id="GO:0051371">
    <property type="term" value="F:muscle alpha-actinin binding"/>
    <property type="evidence" value="ECO:0000318"/>
    <property type="project" value="GO_Central"/>
</dbReference>
<dbReference type="GO" id="GO:0031625">
    <property type="term" value="F:ubiquitin protein ligase binding"/>
    <property type="evidence" value="ECO:0007669"/>
    <property type="project" value="Ensembl"/>
</dbReference>
<dbReference type="GO" id="GO:0030036">
    <property type="term" value="P:actin cytoskeleton organization"/>
    <property type="evidence" value="ECO:0000318"/>
    <property type="project" value="GO_Central"/>
</dbReference>
<dbReference type="GO" id="GO:0007507">
    <property type="term" value="P:heart development"/>
    <property type="evidence" value="ECO:0000318"/>
    <property type="project" value="GO_Central"/>
</dbReference>
<dbReference type="GO" id="GO:0061061">
    <property type="term" value="P:muscle structure development"/>
    <property type="evidence" value="ECO:0000318"/>
    <property type="project" value="GO_Central"/>
</dbReference>
<dbReference type="GO" id="GO:0030163">
    <property type="term" value="P:protein catabolic process"/>
    <property type="evidence" value="ECO:0007669"/>
    <property type="project" value="Ensembl"/>
</dbReference>
<dbReference type="CDD" id="cd09449">
    <property type="entry name" value="LIM_Mystique"/>
    <property type="match status" value="1"/>
</dbReference>
<dbReference type="CDD" id="cd06753">
    <property type="entry name" value="PDZ_PDLIM-like"/>
    <property type="match status" value="1"/>
</dbReference>
<dbReference type="FunFam" id="2.10.110.10:FF:000085">
    <property type="entry name" value="PDZ and LIM domain 2 (mystique)"/>
    <property type="match status" value="1"/>
</dbReference>
<dbReference type="FunFam" id="2.30.42.10:FF:000130">
    <property type="entry name" value="PDZ and LIM domain 2 (mystique)"/>
    <property type="match status" value="1"/>
</dbReference>
<dbReference type="Gene3D" id="2.30.42.10">
    <property type="match status" value="1"/>
</dbReference>
<dbReference type="Gene3D" id="2.10.110.10">
    <property type="entry name" value="Cysteine Rich Protein"/>
    <property type="match status" value="1"/>
</dbReference>
<dbReference type="InterPro" id="IPR031847">
    <property type="entry name" value="PDLI1-4/Zasp-like_mid"/>
</dbReference>
<dbReference type="InterPro" id="IPR001478">
    <property type="entry name" value="PDZ"/>
</dbReference>
<dbReference type="InterPro" id="IPR050604">
    <property type="entry name" value="PDZ-LIM_domain"/>
</dbReference>
<dbReference type="InterPro" id="IPR036034">
    <property type="entry name" value="PDZ_sf"/>
</dbReference>
<dbReference type="InterPro" id="IPR001781">
    <property type="entry name" value="Znf_LIM"/>
</dbReference>
<dbReference type="PANTHER" id="PTHR24214:SF1">
    <property type="entry name" value="PDZ AND LIM DOMAIN PROTEIN 2"/>
    <property type="match status" value="1"/>
</dbReference>
<dbReference type="PANTHER" id="PTHR24214">
    <property type="entry name" value="PDZ AND LIM DOMAIN PROTEIN ZASP"/>
    <property type="match status" value="1"/>
</dbReference>
<dbReference type="Pfam" id="PF15936">
    <property type="entry name" value="DUF4749"/>
    <property type="match status" value="1"/>
</dbReference>
<dbReference type="Pfam" id="PF00412">
    <property type="entry name" value="LIM"/>
    <property type="match status" value="1"/>
</dbReference>
<dbReference type="Pfam" id="PF00595">
    <property type="entry name" value="PDZ"/>
    <property type="match status" value="1"/>
</dbReference>
<dbReference type="SMART" id="SM00132">
    <property type="entry name" value="LIM"/>
    <property type="match status" value="1"/>
</dbReference>
<dbReference type="SMART" id="SM00228">
    <property type="entry name" value="PDZ"/>
    <property type="match status" value="1"/>
</dbReference>
<dbReference type="SUPFAM" id="SSF57716">
    <property type="entry name" value="Glucocorticoid receptor-like (DNA-binding domain)"/>
    <property type="match status" value="1"/>
</dbReference>
<dbReference type="SUPFAM" id="SSF50156">
    <property type="entry name" value="PDZ domain-like"/>
    <property type="match status" value="1"/>
</dbReference>
<dbReference type="PROSITE" id="PS00478">
    <property type="entry name" value="LIM_DOMAIN_1"/>
    <property type="match status" value="1"/>
</dbReference>
<dbReference type="PROSITE" id="PS50023">
    <property type="entry name" value="LIM_DOMAIN_2"/>
    <property type="match status" value="1"/>
</dbReference>
<dbReference type="PROSITE" id="PS50106">
    <property type="entry name" value="PDZ"/>
    <property type="match status" value="1"/>
</dbReference>
<evidence type="ECO:0000250" key="1">
    <source>
        <dbReference type="UniProtKB" id="Q6AYD6"/>
    </source>
</evidence>
<evidence type="ECO:0000250" key="2">
    <source>
        <dbReference type="UniProtKB" id="Q8R1G6"/>
    </source>
</evidence>
<evidence type="ECO:0000255" key="3">
    <source>
        <dbReference type="PROSITE-ProRule" id="PRU00125"/>
    </source>
</evidence>
<evidence type="ECO:0000255" key="4">
    <source>
        <dbReference type="PROSITE-ProRule" id="PRU00143"/>
    </source>
</evidence>
<evidence type="ECO:0000256" key="5">
    <source>
        <dbReference type="SAM" id="MobiDB-lite"/>
    </source>
</evidence>
<evidence type="ECO:0000269" key="6">
    <source>
    </source>
</evidence>
<evidence type="ECO:0000303" key="7">
    <source>
    </source>
</evidence>
<evidence type="ECO:0000303" key="8">
    <source>
    </source>
</evidence>
<evidence type="ECO:0000303" key="9">
    <source ref="1"/>
</evidence>
<evidence type="ECO:0000303" key="10">
    <source ref="2"/>
</evidence>
<evidence type="ECO:0000303" key="11">
    <source ref="3"/>
</evidence>
<evidence type="ECO:0000305" key="12"/>
<evidence type="ECO:0007744" key="13">
    <source>
    </source>
</evidence>
<evidence type="ECO:0007744" key="14">
    <source>
    </source>
</evidence>
<evidence type="ECO:0007829" key="15">
    <source>
        <dbReference type="PDB" id="2PA1"/>
    </source>
</evidence>
<proteinExistence type="evidence at protein level"/>
<gene>
    <name type="primary">PDLIM2</name>
    <name type="ORF">PP6345</name>
</gene>